<evidence type="ECO:0000255" key="1">
    <source>
        <dbReference type="HAMAP-Rule" id="MF_00203"/>
    </source>
</evidence>
<sequence length="624" mass="71417">MTSPQALQLIKDPDRLESRLKEIPAEPGVYFMRDSQDQILYIGKSKKLRSRVRSYFRKFNELGPRLELMVRQVAEIEFIVTDTEAEALALEANLIKQHQPHFNVLLKDDKKYPYLCITWSEAYPRIFITRKRRAEAKDDRYYGPYTDTHLLRQTLGLVKRIFPLRQRPKPLFKDRPCLNFDIGRCPGVCQQLIASEDYRKTIHKVAMIFQGRTSELIDTLTPQMEAAAENLNFEQAARIRDQINGLKTLGEEQKVSLPDDTVSRDAIALAADEQHACIQLFQIRAGRLVGRLGFVADAQSGPPGAILQRVLEEHYAGADPVEIPAEILVQTELPEAEMLATYLTEYKGRKVTLLVPQRQSKAELIEMVERNAQYELARTQRFSDRNAEAQKDLAELLDLPELPQRIEGYDISHVQGSDAVASRVVFIDGLPAKQHYRHYKIKNPNVTAGHSDDFASLAEVVQRRFRKFIEHPETDRLSDPDWPDLIMIDGGKGQLSAVVNALSGTGLLEDLQIVSLAKQREEIFLPGESLPLNTDPDQPGVQLLRRLRDEAHRFAVSFHRQQRTERMRRSRLDEIPGLGYERQKQLLAAFRSIDYIREASPEQLATVPLIGPRLAQQIYDYFHP</sequence>
<reference key="1">
    <citation type="journal article" date="2011" name="MBio">
        <title>Novel metabolic attributes of the genus Cyanothece, comprising a group of unicellular nitrogen-fixing Cyanobacteria.</title>
        <authorList>
            <person name="Bandyopadhyay A."/>
            <person name="Elvitigala T."/>
            <person name="Welsh E."/>
            <person name="Stockel J."/>
            <person name="Liberton M."/>
            <person name="Min H."/>
            <person name="Sherman L.A."/>
            <person name="Pakrasi H.B."/>
        </authorList>
    </citation>
    <scope>NUCLEOTIDE SEQUENCE [LARGE SCALE GENOMIC DNA]</scope>
    <source>
        <strain>PCC 7425 / ATCC 29141</strain>
    </source>
</reference>
<protein>
    <recommendedName>
        <fullName evidence="1">UvrABC system protein C</fullName>
        <shortName evidence="1">Protein UvrC</shortName>
    </recommendedName>
    <alternativeName>
        <fullName evidence="1">Excinuclease ABC subunit C</fullName>
    </alternativeName>
</protein>
<accession>B8HSX6</accession>
<comment type="function">
    <text evidence="1">The UvrABC repair system catalyzes the recognition and processing of DNA lesions. UvrC both incises the 5' and 3' sides of the lesion. The N-terminal half is responsible for the 3' incision and the C-terminal half is responsible for the 5' incision.</text>
</comment>
<comment type="subunit">
    <text evidence="1">Interacts with UvrB in an incision complex.</text>
</comment>
<comment type="subcellular location">
    <subcellularLocation>
        <location evidence="1">Cytoplasm</location>
    </subcellularLocation>
</comment>
<comment type="similarity">
    <text evidence="1">Belongs to the UvrC family.</text>
</comment>
<organism>
    <name type="scientific">Cyanothece sp. (strain PCC 7425 / ATCC 29141)</name>
    <dbReference type="NCBI Taxonomy" id="395961"/>
    <lineage>
        <taxon>Bacteria</taxon>
        <taxon>Bacillati</taxon>
        <taxon>Cyanobacteriota</taxon>
        <taxon>Cyanophyceae</taxon>
        <taxon>Gomontiellales</taxon>
        <taxon>Cyanothecaceae</taxon>
        <taxon>Cyanothece</taxon>
    </lineage>
</organism>
<feature type="chain" id="PRO_1000200579" description="UvrABC system protein C">
    <location>
        <begin position="1"/>
        <end position="624"/>
    </location>
</feature>
<feature type="domain" description="GIY-YIG" evidence="1">
    <location>
        <begin position="25"/>
        <end position="104"/>
    </location>
</feature>
<feature type="domain" description="UVR" evidence="1">
    <location>
        <begin position="214"/>
        <end position="249"/>
    </location>
</feature>
<dbReference type="EMBL" id="CP001344">
    <property type="protein sequence ID" value="ACL42773.1"/>
    <property type="molecule type" value="Genomic_DNA"/>
</dbReference>
<dbReference type="SMR" id="B8HSX6"/>
<dbReference type="STRING" id="395961.Cyan7425_0381"/>
<dbReference type="KEGG" id="cyn:Cyan7425_0381"/>
<dbReference type="eggNOG" id="COG0322">
    <property type="taxonomic scope" value="Bacteria"/>
</dbReference>
<dbReference type="HOGENOM" id="CLU_014841_3_2_3"/>
<dbReference type="GO" id="GO:0005737">
    <property type="term" value="C:cytoplasm"/>
    <property type="evidence" value="ECO:0007669"/>
    <property type="project" value="UniProtKB-SubCell"/>
</dbReference>
<dbReference type="GO" id="GO:0009380">
    <property type="term" value="C:excinuclease repair complex"/>
    <property type="evidence" value="ECO:0007669"/>
    <property type="project" value="InterPro"/>
</dbReference>
<dbReference type="GO" id="GO:0003677">
    <property type="term" value="F:DNA binding"/>
    <property type="evidence" value="ECO:0007669"/>
    <property type="project" value="UniProtKB-UniRule"/>
</dbReference>
<dbReference type="GO" id="GO:0009381">
    <property type="term" value="F:excinuclease ABC activity"/>
    <property type="evidence" value="ECO:0007669"/>
    <property type="project" value="UniProtKB-UniRule"/>
</dbReference>
<dbReference type="GO" id="GO:0006289">
    <property type="term" value="P:nucleotide-excision repair"/>
    <property type="evidence" value="ECO:0007669"/>
    <property type="project" value="UniProtKB-UniRule"/>
</dbReference>
<dbReference type="GO" id="GO:0009432">
    <property type="term" value="P:SOS response"/>
    <property type="evidence" value="ECO:0007669"/>
    <property type="project" value="UniProtKB-UniRule"/>
</dbReference>
<dbReference type="CDD" id="cd10434">
    <property type="entry name" value="GIY-YIG_UvrC_Cho"/>
    <property type="match status" value="1"/>
</dbReference>
<dbReference type="FunFam" id="3.40.1440.10:FF:000001">
    <property type="entry name" value="UvrABC system protein C"/>
    <property type="match status" value="1"/>
</dbReference>
<dbReference type="Gene3D" id="1.10.150.20">
    <property type="entry name" value="5' to 3' exonuclease, C-terminal subdomain"/>
    <property type="match status" value="1"/>
</dbReference>
<dbReference type="Gene3D" id="3.40.1440.10">
    <property type="entry name" value="GIY-YIG endonuclease"/>
    <property type="match status" value="1"/>
</dbReference>
<dbReference type="Gene3D" id="4.10.860.10">
    <property type="entry name" value="UVR domain"/>
    <property type="match status" value="1"/>
</dbReference>
<dbReference type="Gene3D" id="3.30.420.340">
    <property type="entry name" value="UvrC, RNAse H endonuclease domain"/>
    <property type="match status" value="1"/>
</dbReference>
<dbReference type="HAMAP" id="MF_00203">
    <property type="entry name" value="UvrC"/>
    <property type="match status" value="1"/>
</dbReference>
<dbReference type="InterPro" id="IPR041663">
    <property type="entry name" value="DisA/LigA_HHH"/>
</dbReference>
<dbReference type="InterPro" id="IPR000305">
    <property type="entry name" value="GIY-YIG_endonuc"/>
</dbReference>
<dbReference type="InterPro" id="IPR035901">
    <property type="entry name" value="GIY-YIG_endonuc_sf"/>
</dbReference>
<dbReference type="InterPro" id="IPR047296">
    <property type="entry name" value="GIY-YIG_UvrC_Cho"/>
</dbReference>
<dbReference type="InterPro" id="IPR003583">
    <property type="entry name" value="Hlx-hairpin-Hlx_DNA-bd_motif"/>
</dbReference>
<dbReference type="InterPro" id="IPR010994">
    <property type="entry name" value="RuvA_2-like"/>
</dbReference>
<dbReference type="InterPro" id="IPR001943">
    <property type="entry name" value="UVR_dom"/>
</dbReference>
<dbReference type="InterPro" id="IPR036876">
    <property type="entry name" value="UVR_dom_sf"/>
</dbReference>
<dbReference type="InterPro" id="IPR050066">
    <property type="entry name" value="UvrABC_protein_C"/>
</dbReference>
<dbReference type="InterPro" id="IPR004791">
    <property type="entry name" value="UvrC"/>
</dbReference>
<dbReference type="InterPro" id="IPR001162">
    <property type="entry name" value="UvrC_RNase_H_dom"/>
</dbReference>
<dbReference type="InterPro" id="IPR038476">
    <property type="entry name" value="UvrC_RNase_H_dom_sf"/>
</dbReference>
<dbReference type="NCBIfam" id="NF001824">
    <property type="entry name" value="PRK00558.1-5"/>
    <property type="match status" value="1"/>
</dbReference>
<dbReference type="NCBIfam" id="TIGR00194">
    <property type="entry name" value="uvrC"/>
    <property type="match status" value="1"/>
</dbReference>
<dbReference type="PANTHER" id="PTHR30562:SF1">
    <property type="entry name" value="UVRABC SYSTEM PROTEIN C"/>
    <property type="match status" value="1"/>
</dbReference>
<dbReference type="PANTHER" id="PTHR30562">
    <property type="entry name" value="UVRC/OXIDOREDUCTASE"/>
    <property type="match status" value="1"/>
</dbReference>
<dbReference type="Pfam" id="PF01541">
    <property type="entry name" value="GIY-YIG"/>
    <property type="match status" value="1"/>
</dbReference>
<dbReference type="Pfam" id="PF12826">
    <property type="entry name" value="HHH_2"/>
    <property type="match status" value="1"/>
</dbReference>
<dbReference type="Pfam" id="PF02151">
    <property type="entry name" value="UVR"/>
    <property type="match status" value="1"/>
</dbReference>
<dbReference type="Pfam" id="PF22920">
    <property type="entry name" value="UvrC_RNaseH"/>
    <property type="match status" value="1"/>
</dbReference>
<dbReference type="Pfam" id="PF08459">
    <property type="entry name" value="UvrC_RNaseH_dom"/>
    <property type="match status" value="1"/>
</dbReference>
<dbReference type="SMART" id="SM00465">
    <property type="entry name" value="GIYc"/>
    <property type="match status" value="1"/>
</dbReference>
<dbReference type="SMART" id="SM00278">
    <property type="entry name" value="HhH1"/>
    <property type="match status" value="2"/>
</dbReference>
<dbReference type="SUPFAM" id="SSF46600">
    <property type="entry name" value="C-terminal UvrC-binding domain of UvrB"/>
    <property type="match status" value="1"/>
</dbReference>
<dbReference type="SUPFAM" id="SSF82771">
    <property type="entry name" value="GIY-YIG endonuclease"/>
    <property type="match status" value="1"/>
</dbReference>
<dbReference type="SUPFAM" id="SSF47781">
    <property type="entry name" value="RuvA domain 2-like"/>
    <property type="match status" value="1"/>
</dbReference>
<dbReference type="PROSITE" id="PS50164">
    <property type="entry name" value="GIY_YIG"/>
    <property type="match status" value="1"/>
</dbReference>
<dbReference type="PROSITE" id="PS50151">
    <property type="entry name" value="UVR"/>
    <property type="match status" value="1"/>
</dbReference>
<dbReference type="PROSITE" id="PS50165">
    <property type="entry name" value="UVRC"/>
    <property type="match status" value="1"/>
</dbReference>
<proteinExistence type="inferred from homology"/>
<gene>
    <name evidence="1" type="primary">uvrC</name>
    <name type="ordered locus">Cyan7425_0381</name>
</gene>
<keyword id="KW-0963">Cytoplasm</keyword>
<keyword id="KW-0227">DNA damage</keyword>
<keyword id="KW-0228">DNA excision</keyword>
<keyword id="KW-0234">DNA repair</keyword>
<keyword id="KW-0267">Excision nuclease</keyword>
<keyword id="KW-0742">SOS response</keyword>
<name>UVRC_CYAP4</name>